<feature type="chain" id="PRO_0000382438" description="Major tegument protein">
    <location>
        <begin position="1"/>
        <end position="1318"/>
    </location>
</feature>
<organism>
    <name type="scientific">Epstein-Barr virus (strain GD1)</name>
    <name type="common">HHV-4</name>
    <name type="synonym">Human gammaherpesvirus 4</name>
    <dbReference type="NCBI Taxonomy" id="10376"/>
    <lineage>
        <taxon>Viruses</taxon>
        <taxon>Duplodnaviria</taxon>
        <taxon>Heunggongvirae</taxon>
        <taxon>Peploviricota</taxon>
        <taxon>Herviviricetes</taxon>
        <taxon>Herpesvirales</taxon>
        <taxon>Orthoherpesviridae</taxon>
        <taxon>Gammaherpesvirinae</taxon>
        <taxon>Lymphocryptovirus</taxon>
        <taxon>Lymphocryptovirus humangamma4</taxon>
    </lineage>
</organism>
<dbReference type="EMBL" id="AY961628">
    <property type="protein sequence ID" value="AAY41097.1"/>
    <property type="molecule type" value="Genomic_DNA"/>
</dbReference>
<dbReference type="SMR" id="Q3KSV4"/>
<dbReference type="Proteomes" id="UP000007641">
    <property type="component" value="Genome"/>
</dbReference>
<dbReference type="GO" id="GO:0043657">
    <property type="term" value="C:host cell"/>
    <property type="evidence" value="ECO:0007669"/>
    <property type="project" value="GOC"/>
</dbReference>
<dbReference type="GO" id="GO:0042025">
    <property type="term" value="C:host cell nucleus"/>
    <property type="evidence" value="ECO:0007669"/>
    <property type="project" value="UniProtKB-SubCell"/>
</dbReference>
<dbReference type="GO" id="GO:0019033">
    <property type="term" value="C:viral tegument"/>
    <property type="evidence" value="ECO:0007669"/>
    <property type="project" value="UniProtKB-SubCell"/>
</dbReference>
<dbReference type="GO" id="GO:0004642">
    <property type="term" value="F:phosphoribosylformylglycinamidine synthase activity"/>
    <property type="evidence" value="ECO:0007669"/>
    <property type="project" value="TreeGrafter"/>
</dbReference>
<dbReference type="GO" id="GO:0075733">
    <property type="term" value="P:intracellular transport of virus"/>
    <property type="evidence" value="ECO:0007669"/>
    <property type="project" value="InterPro"/>
</dbReference>
<dbReference type="GO" id="GO:0006164">
    <property type="term" value="P:purine nucleotide biosynthetic process"/>
    <property type="evidence" value="ECO:0007669"/>
    <property type="project" value="TreeGrafter"/>
</dbReference>
<dbReference type="Gene3D" id="3.40.50.880">
    <property type="match status" value="1"/>
</dbReference>
<dbReference type="Gene3D" id="3.90.650.10">
    <property type="entry name" value="PurM-like C-terminal domain"/>
    <property type="match status" value="1"/>
</dbReference>
<dbReference type="Gene3D" id="3.30.1330.10">
    <property type="entry name" value="PurM-like, N-terminal domain"/>
    <property type="match status" value="1"/>
</dbReference>
<dbReference type="InterPro" id="IPR029062">
    <property type="entry name" value="Class_I_gatase-like"/>
</dbReference>
<dbReference type="InterPro" id="IPR010077">
    <property type="entry name" value="Herpes_virus_tegument"/>
</dbReference>
<dbReference type="InterPro" id="IPR010918">
    <property type="entry name" value="PurM-like_C_dom"/>
</dbReference>
<dbReference type="InterPro" id="IPR036676">
    <property type="entry name" value="PurM-like_C_sf"/>
</dbReference>
<dbReference type="InterPro" id="IPR036921">
    <property type="entry name" value="PurM-like_N_sf"/>
</dbReference>
<dbReference type="InterPro" id="IPR024346">
    <property type="entry name" value="Tegument_herpes_virus_N"/>
</dbReference>
<dbReference type="NCBIfam" id="TIGR01739">
    <property type="entry name" value="tegu_FGAM_synt"/>
    <property type="match status" value="1"/>
</dbReference>
<dbReference type="PANTHER" id="PTHR10099">
    <property type="entry name" value="PHOSPHORIBOSYLFORMYLGLYCINAMIDINE SYNTHASE"/>
    <property type="match status" value="1"/>
</dbReference>
<dbReference type="PANTHER" id="PTHR10099:SF1">
    <property type="entry name" value="PHOSPHORIBOSYLFORMYLGLYCINAMIDINE SYNTHASE"/>
    <property type="match status" value="1"/>
</dbReference>
<dbReference type="Pfam" id="PF02769">
    <property type="entry name" value="AIRS_C"/>
    <property type="match status" value="1"/>
</dbReference>
<dbReference type="Pfam" id="PF13507">
    <property type="entry name" value="GATase_5"/>
    <property type="match status" value="1"/>
</dbReference>
<dbReference type="Pfam" id="PF12818">
    <property type="entry name" value="Tegument_dsDNA"/>
    <property type="match status" value="1"/>
</dbReference>
<dbReference type="SMART" id="SM01211">
    <property type="entry name" value="GATase_5"/>
    <property type="match status" value="1"/>
</dbReference>
<dbReference type="SUPFAM" id="SSF52317">
    <property type="entry name" value="Class I glutamine amidotransferase-like"/>
    <property type="match status" value="1"/>
</dbReference>
<dbReference type="SUPFAM" id="SSF56042">
    <property type="entry name" value="PurM C-terminal domain-like"/>
    <property type="match status" value="1"/>
</dbReference>
<dbReference type="SUPFAM" id="SSF55326">
    <property type="entry name" value="PurM N-terminal domain-like"/>
    <property type="match status" value="1"/>
</dbReference>
<reference key="1">
    <citation type="journal article" date="2005" name="J. Virol.">
        <title>Genomic sequence analysis of Epstein-Barr virus strain GD1 from a nasopharyngeal carcinoma patient.</title>
        <authorList>
            <person name="Zeng M.-S."/>
            <person name="Li D.-J."/>
            <person name="Liu Q.-L."/>
            <person name="Song L.-B."/>
            <person name="Li M.-Z."/>
            <person name="Zhang R.-H."/>
            <person name="Yu X.-J."/>
            <person name="Wang H.-M."/>
            <person name="Ernberg I."/>
            <person name="Zeng Y.-X."/>
        </authorList>
    </citation>
    <scope>NUCLEOTIDE SEQUENCE [LARGE SCALE GENOMIC DNA]</scope>
</reference>
<accession>Q3KSV4</accession>
<name>MTP_EBVG</name>
<protein>
    <recommendedName>
        <fullName>Major tegument protein</fullName>
        <shortName>MTP</shortName>
    </recommendedName>
    <alternativeName>
        <fullName>Protein p140</fullName>
    </alternativeName>
</protein>
<proteinExistence type="inferred from homology"/>
<evidence type="ECO:0000250" key="1">
    <source>
        <dbReference type="UniProtKB" id="P03179"/>
    </source>
</evidence>
<evidence type="ECO:0000305" key="2"/>
<organismHost>
    <name type="scientific">Homo sapiens</name>
    <name type="common">Human</name>
    <dbReference type="NCBI Taxonomy" id="9606"/>
</organismHost>
<sequence length="1318" mass="142800">MEERGRETQMPVARYGGPFIMVRLFGQDGEANIQEQRLYELLSDPRSALGLDPGPLIAENLLLVALRGTNNDPRPQRQERARELALVGILLGNGEQGEHLGTESALEASGNNYVYAYGPDWMARPSTWSAEIQQFLRLLGATYVLRVEMGRQFGFEVHRSRPSFRQFQAINHLVLFDNALRKYDSGQVAAGFQRALLVAGPETADTRPDLRKLNEWVFGGRAAGGRQLADELKIVSALRDTYSGHLVLQPTETLDTWKVLSRDTRTAHSLEHGFIHAAGTIQANCPQLFMRRQHPGLFPFVNAIASSLGWYYQTATGPGADARAAARRQQAFQTRAAAECHAKSGVPVVAGFYRTINATLKGGEGLQPTMFNGELGAIKHQALDTVRYDYGHYLIMLGPFQPWSGLTAPPCPYAESSWAQAAVQTALELFSALYPAPCISGYARPPGPSAVIEHLRSLVPKGGLLLFLSHLPDDVKDGLGEMGPARATGPGMQQFVGSYFLNPACSNVFITVRQRGEKINGRTVLQALGRACDMAGCQHYVLGSTVPLGGLNFVNDLASPVSTAEMMDDFSPFFTVEFPPIQEEGASSPVPLDVDESMDISPSYELPWLSLESCLTSILSHPTVGSKEHLVRHTDRVSGGRVAQQPGVGPLDLPLADYAFVAHSQVWTRPGGAPPLPYRTWDRMTEKLLVSAKPGGENVKVSGTVITLGEQGYKVSLDLREGTRLAMAEALLNAAFAPILDPEDVLLTLHLHLDPSRADNSAVMEAMTAASDYARGLGVKLTFGSASCPETGSSASSFMTVVASVSAPGEFSGPLITPVLQKTGSLLIAVRCGDGKIQGGSLFEQLFSDVATTPRAPEALSLKNLFRAVQQLVKSGIVLSGHDISDGGLVTCLVEMALAGQRGVTITMPVASDYLPEMFAEHPGLVFEVEERSVGEVLQTLRSMNMYPAVLGRVGEQGPDQMFEVQHGPETVLRQSLRLLLGTWSSFASEQYECLRPDRINRSMHVSDYGYNEALAVSPLTGKNLSPRRLVTEPDPRCQVAVLCAPGTRGHESLLAAFTNAGCLCRRVFFREVRDNTFLDKYVGLAIGGVHGARDSALAGRATVALINRSPALRDAILKFLNRPDTFSVALGELGVQVLAGLGAVGSTDNPPAPGVEVNVQRSPLILAPNASGMFESRWLNISIPATTSSVMLRGLRGCVLPCWVQGSCLGLQFTNLGMPYVLQNAHQIACHFHSNGTDAWRFAMNYPRNPTEQGNIAGLCSRDGRHLALLCDPSLCTDFWQWEHIPPAFGHPTGCSPWTLMFQAAHLWSLRHGRPSE</sequence>
<gene>
    <name type="ORF">BNRF1</name>
</gene>
<comment type="function">
    <text evidence="1">Tegument protein that plays a role in the inhibition of host intrinsic defenses to promote viral early gene activation. Interacts with host DAXX and thereby disrupts the complex between DAXX and ATRX. Suppresses the DAXX-ATRX dependent deposition of histone H3.3 on viral chromatin allowing viral transcription. Targets also host SMC5/6 for proteasomal degradation in a CUL7 and calpain-dependent manner to support nuclear membrane-less replication compartment formation and lytic virus replication.</text>
</comment>
<comment type="subunit">
    <text evidence="1">Interacts with host DAXX; this interaction disrupts the chromatin remodeling complex ATRX:DAXX and thus allows viral transcription. Interacts with host SMC6; this interaction targets SMC5-SMC6 complex for proteasomal degradation.</text>
</comment>
<comment type="subcellular location">
    <subcellularLocation>
        <location evidence="1">Virion tegument</location>
    </subcellularLocation>
    <subcellularLocation>
        <location evidence="1">Host nucleus</location>
    </subcellularLocation>
    <text evidence="1">Colocalizes with host DAXX at PML nuclear bodies.</text>
</comment>
<comment type="similarity">
    <text evidence="2">Belongs to the herpesviridae MTP family.</text>
</comment>
<comment type="caution">
    <text evidence="2">Controvertial experiments have localized MTP at the virion surface.</text>
</comment>
<keyword id="KW-1048">Host nucleus</keyword>
<keyword id="KW-0945">Host-virus interaction</keyword>
<keyword id="KW-0426">Late protein</keyword>
<keyword id="KW-0946">Virion</keyword>
<keyword id="KW-0920">Virion tegument</keyword>